<name>BLH1_YEAS7</name>
<protein>
    <recommendedName>
        <fullName>Cysteine proteinase 1, mitochondrial</fullName>
        <ecNumber>3.4.22.40</ecNumber>
    </recommendedName>
    <alternativeName>
        <fullName>Bleomycin hydrolase</fullName>
        <shortName>BLM hydrolase</shortName>
    </alternativeName>
    <alternativeName>
        <fullName>Homocysteine-thiolactonase</fullName>
        <shortName>HTLase</shortName>
        <shortName>Hcy-thiolactonase</shortName>
    </alternativeName>
    <alternativeName>
        <fullName>Leucine aminopeptidase 3</fullName>
    </alternativeName>
    <alternativeName>
        <fullName>Y3</fullName>
    </alternativeName>
</protein>
<comment type="function">
    <text evidence="1">The normal physiological role of the enzyme is unknown, but it is not essential for the viability of yeast cells. Has aminopeptidase activity, shortening substrate peptides sequentially by 1 amino acid. Has bleomycin hydrolase activity, which can protect the cell from the toxic effects of bleomycin. Has homocysteine-thiolactonase activity, protecting the cell against homocysteine toxicity. Acts as a repressor in the GAL4 regulatory system, but this does not require either the peptidase or nucleic acid-binding activities (By similarity).</text>
</comment>
<comment type="catalytic activity">
    <reaction>
        <text>Inactivates bleomycin B2 (a cytotoxic glycometallopeptide) by hydrolysis of a carboxyamide bond of beta-aminoalanine, but also shows general aminopeptidase activity. The specificity varies somewhat with source, but amino acid arylamides of Met, Leu and Ala are preferred.</text>
        <dbReference type="EC" id="3.4.22.40"/>
    </reaction>
</comment>
<comment type="activity regulation">
    <text evidence="1">Inhibited by E64, a specific inhibitor of cysteine proteases, N-ethylmaleimide, iodacetamide, and mercury and zinc ions.</text>
</comment>
<comment type="subunit">
    <text evidence="1">Homohexamer. Binds to nucleic acids. Binds single-stranded DNA and RNA with higher affinity than double-stranded DNA (By similarity).</text>
</comment>
<comment type="subcellular location">
    <subcellularLocation>
        <location evidence="1">Mitochondrion</location>
    </subcellularLocation>
    <subcellularLocation>
        <location evidence="1">Cytoplasm</location>
    </subcellularLocation>
</comment>
<comment type="alternative products">
    <event type="alternative initiation"/>
    <isoform>
        <id>A6ZRK4-1</id>
        <name>Mitochondrial</name>
        <sequence type="displayed"/>
    </isoform>
    <isoform>
        <id>A6ZRK4-2</id>
        <name>Cytoplasmic</name>
        <sequence type="described" ref="VSP_038914"/>
    </isoform>
</comment>
<comment type="PTM">
    <text evidence="1">The N-terminus of isoform Cytoplasmic is blocked.</text>
</comment>
<comment type="similarity">
    <text evidence="3 4">Belongs to the peptidase C1 family.</text>
</comment>
<comment type="sequence caution" evidence="5">
    <conflict type="erroneous initiation">
        <sequence resource="EMBL-CDS" id="EDN62586"/>
    </conflict>
</comment>
<proteinExistence type="inferred from homology"/>
<evidence type="ECO:0000250" key="1"/>
<evidence type="ECO:0000255" key="2"/>
<evidence type="ECO:0000255" key="3">
    <source>
        <dbReference type="PROSITE-ProRule" id="PRU10088"/>
    </source>
</evidence>
<evidence type="ECO:0000255" key="4">
    <source>
        <dbReference type="PROSITE-ProRule" id="PRU10089"/>
    </source>
</evidence>
<evidence type="ECO:0000305" key="5"/>
<keyword id="KW-0024">Alternative initiation</keyword>
<keyword id="KW-0963">Cytoplasm</keyword>
<keyword id="KW-0238">DNA-binding</keyword>
<keyword id="KW-0378">Hydrolase</keyword>
<keyword id="KW-0496">Mitochondrion</keyword>
<keyword id="KW-0645">Protease</keyword>
<keyword id="KW-0788">Thiol protease</keyword>
<keyword id="KW-0809">Transit peptide</keyword>
<dbReference type="EC" id="3.4.22.40"/>
<dbReference type="EMBL" id="AAFW02000067">
    <property type="protein sequence ID" value="EDN62586.1"/>
    <property type="status" value="ALT_INIT"/>
    <property type="molecule type" value="Genomic_DNA"/>
</dbReference>
<dbReference type="SMR" id="A6ZRK4"/>
<dbReference type="MEROPS" id="C01.085"/>
<dbReference type="HOGENOM" id="CLU_038600_0_1_1"/>
<dbReference type="OrthoDB" id="16121at4893"/>
<dbReference type="Proteomes" id="UP000007060">
    <property type="component" value="Unassembled WGS sequence"/>
</dbReference>
<dbReference type="GO" id="GO:0005739">
    <property type="term" value="C:mitochondrion"/>
    <property type="evidence" value="ECO:0007669"/>
    <property type="project" value="UniProtKB-SubCell"/>
</dbReference>
<dbReference type="GO" id="GO:0070005">
    <property type="term" value="F:cysteine-type aminopeptidase activity"/>
    <property type="evidence" value="ECO:0007669"/>
    <property type="project" value="InterPro"/>
</dbReference>
<dbReference type="GO" id="GO:0004197">
    <property type="term" value="F:cysteine-type endopeptidase activity"/>
    <property type="evidence" value="ECO:0007669"/>
    <property type="project" value="UniProtKB-EC"/>
</dbReference>
<dbReference type="GO" id="GO:0003677">
    <property type="term" value="F:DNA binding"/>
    <property type="evidence" value="ECO:0007669"/>
    <property type="project" value="UniProtKB-KW"/>
</dbReference>
<dbReference type="GO" id="GO:0043418">
    <property type="term" value="P:homocysteine catabolic process"/>
    <property type="evidence" value="ECO:0007669"/>
    <property type="project" value="TreeGrafter"/>
</dbReference>
<dbReference type="GO" id="GO:0006508">
    <property type="term" value="P:proteolysis"/>
    <property type="evidence" value="ECO:0007669"/>
    <property type="project" value="UniProtKB-KW"/>
</dbReference>
<dbReference type="GO" id="GO:0009636">
    <property type="term" value="P:response to toxic substance"/>
    <property type="evidence" value="ECO:0007669"/>
    <property type="project" value="TreeGrafter"/>
</dbReference>
<dbReference type="CDD" id="cd00585">
    <property type="entry name" value="Peptidase_C1B"/>
    <property type="match status" value="1"/>
</dbReference>
<dbReference type="FunFam" id="3.90.70.10:FF:000091">
    <property type="entry name" value="Aminopeptidase C"/>
    <property type="match status" value="1"/>
</dbReference>
<dbReference type="Gene3D" id="3.90.70.10">
    <property type="entry name" value="Cysteine proteinases"/>
    <property type="match status" value="1"/>
</dbReference>
<dbReference type="InterPro" id="IPR038765">
    <property type="entry name" value="Papain-like_cys_pep_sf"/>
</dbReference>
<dbReference type="InterPro" id="IPR000169">
    <property type="entry name" value="Pept_cys_AS"/>
</dbReference>
<dbReference type="InterPro" id="IPR025660">
    <property type="entry name" value="Pept_his_AS"/>
</dbReference>
<dbReference type="InterPro" id="IPR004134">
    <property type="entry name" value="Peptidase_C1B"/>
</dbReference>
<dbReference type="PANTHER" id="PTHR10363">
    <property type="entry name" value="BLEOMYCIN HYDROLASE"/>
    <property type="match status" value="1"/>
</dbReference>
<dbReference type="PANTHER" id="PTHR10363:SF2">
    <property type="entry name" value="BLEOMYCIN HYDROLASE"/>
    <property type="match status" value="1"/>
</dbReference>
<dbReference type="Pfam" id="PF03051">
    <property type="entry name" value="Peptidase_C1_2"/>
    <property type="match status" value="1"/>
</dbReference>
<dbReference type="PIRSF" id="PIRSF005700">
    <property type="entry name" value="PepC"/>
    <property type="match status" value="1"/>
</dbReference>
<dbReference type="SUPFAM" id="SSF54001">
    <property type="entry name" value="Cysteine proteinases"/>
    <property type="match status" value="1"/>
</dbReference>
<dbReference type="PROSITE" id="PS00139">
    <property type="entry name" value="THIOL_PROTEASE_CYS"/>
    <property type="match status" value="1"/>
</dbReference>
<dbReference type="PROSITE" id="PS00639">
    <property type="entry name" value="THIOL_PROTEASE_HIS"/>
    <property type="match status" value="1"/>
</dbReference>
<feature type="transit peptide" description="Mitochondrion" evidence="2">
    <location>
        <begin position="1"/>
        <end position="30"/>
    </location>
</feature>
<feature type="chain" id="PRO_0000393306" description="Cysteine proteinase 1, mitochondrial">
    <location>
        <begin position="31"/>
        <end position="482"/>
    </location>
</feature>
<feature type="propeptide" id="PRO_0000393307" description="Removed in mature form; by autocatalysis" evidence="1">
    <location>
        <position position="483"/>
    </location>
</feature>
<feature type="active site" evidence="1">
    <location>
        <position position="102"/>
    </location>
</feature>
<feature type="active site" evidence="1">
    <location>
        <position position="398"/>
    </location>
</feature>
<feature type="active site" evidence="1">
    <location>
        <position position="421"/>
    </location>
</feature>
<feature type="splice variant" id="VSP_038914" description="In isoform Cytoplasmic." evidence="5">
    <location>
        <begin position="1"/>
        <end position="29"/>
    </location>
</feature>
<accession>A6ZRK4</accession>
<gene>
    <name type="primary">LAP3</name>
    <name type="synonym">BLH1</name>
    <name type="synonym">GAL6</name>
    <name type="synonym">YCP1</name>
    <name type="ORF">SCY_4565</name>
</gene>
<sequence length="483" mass="55513">MLPTSVSWSLYLKTFRSHLLRAPQIVLKRMSSSIDISKINSWNKEFQSDLTHQLATTVLKNYNADDALLNKTRLQKQDNRVFNTVVSTDSTPVTNQKSSGRCWLFAATNQLRLNVLSELNLKEFELSQAYLFFYDKLEKANYFLDQIVSSADQDIDSRLVQYLLAAPTEDGGQYSMFLNLVKKYGLIPKDLYGDLPYSTTASRKWNSLLTTKLREFAETLRTALKERSADDSIIVTLREQMQREIFRLMSLFMDIPPVQPNEQFTWEYVDKDKKIHTIKSTPLEFASKYAKLDPSTPVSLINDPRHPYGKLIKIDRLGNVLGGDAVIYLNVDNETLSKLVVKRLQNNKAVFFGSHTPKFMDKKTGVMDIELWNYPAIGYNLPQQKASRIRYHESLMTHAMLITGCHVDETSKLPLRYRVENSWGKDSGKDGLYVMTQKYFEEYCFQIVVDINELPKELASKFTSGKEEPIVLPIWDPMGALAK</sequence>
<organism>
    <name type="scientific">Saccharomyces cerevisiae (strain YJM789)</name>
    <name type="common">Baker's yeast</name>
    <dbReference type="NCBI Taxonomy" id="307796"/>
    <lineage>
        <taxon>Eukaryota</taxon>
        <taxon>Fungi</taxon>
        <taxon>Dikarya</taxon>
        <taxon>Ascomycota</taxon>
        <taxon>Saccharomycotina</taxon>
        <taxon>Saccharomycetes</taxon>
        <taxon>Saccharomycetales</taxon>
        <taxon>Saccharomycetaceae</taxon>
        <taxon>Saccharomyces</taxon>
    </lineage>
</organism>
<reference key="1">
    <citation type="journal article" date="2007" name="Proc. Natl. Acad. Sci. U.S.A.">
        <title>Genome sequencing and comparative analysis of Saccharomyces cerevisiae strain YJM789.</title>
        <authorList>
            <person name="Wei W."/>
            <person name="McCusker J.H."/>
            <person name="Hyman R.W."/>
            <person name="Jones T."/>
            <person name="Ning Y."/>
            <person name="Cao Z."/>
            <person name="Gu Z."/>
            <person name="Bruno D."/>
            <person name="Miranda M."/>
            <person name="Nguyen M."/>
            <person name="Wilhelmy J."/>
            <person name="Komp C."/>
            <person name="Tamse R."/>
            <person name="Wang X."/>
            <person name="Jia P."/>
            <person name="Luedi P."/>
            <person name="Oefner P.J."/>
            <person name="David L."/>
            <person name="Dietrich F.S."/>
            <person name="Li Y."/>
            <person name="Davis R.W."/>
            <person name="Steinmetz L.M."/>
        </authorList>
    </citation>
    <scope>NUCLEOTIDE SEQUENCE [LARGE SCALE GENOMIC DNA]</scope>
    <source>
        <strain>YJM789</strain>
    </source>
</reference>